<keyword id="KW-0963">Cytoplasm</keyword>
<keyword id="KW-0238">DNA-binding</keyword>
<keyword id="KW-0677">Repeat</keyword>
<keyword id="KW-0678">Repressor</keyword>
<keyword id="KW-0804">Transcription</keyword>
<keyword id="KW-0805">Transcription regulation</keyword>
<comment type="function">
    <text evidence="1">Negatively regulates its own expression and that of the subsequent genes in the proximal part of the division and cell wall (dcw) gene cluster. Acts by binding directly to DNA. May also regulate the expression of genes outside the dcw cluster.</text>
</comment>
<comment type="subunit">
    <text evidence="1">Forms oligomers.</text>
</comment>
<comment type="subcellular location">
    <subcellularLocation>
        <location evidence="1">Cytoplasm</location>
        <location evidence="1">Nucleoid</location>
    </subcellularLocation>
</comment>
<comment type="similarity">
    <text evidence="1">Belongs to the MraZ family.</text>
</comment>
<proteinExistence type="inferred from homology"/>
<feature type="chain" id="PRO_1000062949" description="Transcriptional regulator MraZ">
    <location>
        <begin position="1"/>
        <end position="152"/>
    </location>
</feature>
<feature type="domain" description="SpoVT-AbrB 1" evidence="2">
    <location>
        <begin position="5"/>
        <end position="52"/>
    </location>
</feature>
<feature type="domain" description="SpoVT-AbrB 2" evidence="2">
    <location>
        <begin position="81"/>
        <end position="124"/>
    </location>
</feature>
<accession>A7FM75</accession>
<gene>
    <name evidence="1" type="primary">mraZ</name>
    <name type="ordered locus">YpsIP31758_3396</name>
</gene>
<organism>
    <name type="scientific">Yersinia pseudotuberculosis serotype O:1b (strain IP 31758)</name>
    <dbReference type="NCBI Taxonomy" id="349747"/>
    <lineage>
        <taxon>Bacteria</taxon>
        <taxon>Pseudomonadati</taxon>
        <taxon>Pseudomonadota</taxon>
        <taxon>Gammaproteobacteria</taxon>
        <taxon>Enterobacterales</taxon>
        <taxon>Yersiniaceae</taxon>
        <taxon>Yersinia</taxon>
    </lineage>
</organism>
<reference key="1">
    <citation type="journal article" date="2007" name="PLoS Genet.">
        <title>The complete genome sequence of Yersinia pseudotuberculosis IP31758, the causative agent of Far East scarlet-like fever.</title>
        <authorList>
            <person name="Eppinger M."/>
            <person name="Rosovitz M.J."/>
            <person name="Fricke W.F."/>
            <person name="Rasko D.A."/>
            <person name="Kokorina G."/>
            <person name="Fayolle C."/>
            <person name="Lindler L.E."/>
            <person name="Carniel E."/>
            <person name="Ravel J."/>
        </authorList>
    </citation>
    <scope>NUCLEOTIDE SEQUENCE [LARGE SCALE GENOMIC DNA]</scope>
    <source>
        <strain>IP 31758</strain>
    </source>
</reference>
<sequence length="152" mass="17472">MFRGATMVNLDSKGRLAVPTRYRESLNEESQGQMVCTIDLHQPCLLLYPLPEWEIIEQKLSRLSSMNPAERRVQRLLLGHASECQMDGAGRLLIAGTLRQHAGLNKEVMLVGQFNKFELWDEQTWYQQVKDDIDAEQSTQEPLSERLQDLSL</sequence>
<dbReference type="EMBL" id="CP000720">
    <property type="protein sequence ID" value="ABS45970.1"/>
    <property type="molecule type" value="Genomic_DNA"/>
</dbReference>
<dbReference type="RefSeq" id="WP_011191730.1">
    <property type="nucleotide sequence ID" value="NC_009708.1"/>
</dbReference>
<dbReference type="SMR" id="A7FM75"/>
<dbReference type="GeneID" id="49787316"/>
<dbReference type="KEGG" id="ypi:YpsIP31758_3396"/>
<dbReference type="HOGENOM" id="CLU_107907_2_0_6"/>
<dbReference type="Proteomes" id="UP000002412">
    <property type="component" value="Chromosome"/>
</dbReference>
<dbReference type="GO" id="GO:0005737">
    <property type="term" value="C:cytoplasm"/>
    <property type="evidence" value="ECO:0007669"/>
    <property type="project" value="UniProtKB-UniRule"/>
</dbReference>
<dbReference type="GO" id="GO:0009295">
    <property type="term" value="C:nucleoid"/>
    <property type="evidence" value="ECO:0007669"/>
    <property type="project" value="UniProtKB-SubCell"/>
</dbReference>
<dbReference type="GO" id="GO:0003700">
    <property type="term" value="F:DNA-binding transcription factor activity"/>
    <property type="evidence" value="ECO:0007669"/>
    <property type="project" value="UniProtKB-UniRule"/>
</dbReference>
<dbReference type="GO" id="GO:0000976">
    <property type="term" value="F:transcription cis-regulatory region binding"/>
    <property type="evidence" value="ECO:0007669"/>
    <property type="project" value="TreeGrafter"/>
</dbReference>
<dbReference type="GO" id="GO:2000143">
    <property type="term" value="P:negative regulation of DNA-templated transcription initiation"/>
    <property type="evidence" value="ECO:0007669"/>
    <property type="project" value="TreeGrafter"/>
</dbReference>
<dbReference type="CDD" id="cd16321">
    <property type="entry name" value="MraZ_C"/>
    <property type="match status" value="1"/>
</dbReference>
<dbReference type="CDD" id="cd16320">
    <property type="entry name" value="MraZ_N"/>
    <property type="match status" value="1"/>
</dbReference>
<dbReference type="FunFam" id="3.40.1550.20:FF:000001">
    <property type="entry name" value="Transcriptional regulator MraZ"/>
    <property type="match status" value="1"/>
</dbReference>
<dbReference type="Gene3D" id="3.40.1550.20">
    <property type="entry name" value="Transcriptional regulator MraZ domain"/>
    <property type="match status" value="1"/>
</dbReference>
<dbReference type="HAMAP" id="MF_01008">
    <property type="entry name" value="MraZ"/>
    <property type="match status" value="1"/>
</dbReference>
<dbReference type="InterPro" id="IPR003444">
    <property type="entry name" value="MraZ"/>
</dbReference>
<dbReference type="InterPro" id="IPR035644">
    <property type="entry name" value="MraZ_C"/>
</dbReference>
<dbReference type="InterPro" id="IPR020603">
    <property type="entry name" value="MraZ_dom"/>
</dbReference>
<dbReference type="InterPro" id="IPR035642">
    <property type="entry name" value="MraZ_N"/>
</dbReference>
<dbReference type="InterPro" id="IPR038619">
    <property type="entry name" value="MraZ_sf"/>
</dbReference>
<dbReference type="InterPro" id="IPR007159">
    <property type="entry name" value="SpoVT-AbrB_dom"/>
</dbReference>
<dbReference type="InterPro" id="IPR037914">
    <property type="entry name" value="SpoVT-AbrB_sf"/>
</dbReference>
<dbReference type="NCBIfam" id="TIGR00242">
    <property type="entry name" value="division/cell wall cluster transcriptional repressor MraZ"/>
    <property type="match status" value="1"/>
</dbReference>
<dbReference type="PANTHER" id="PTHR34701">
    <property type="entry name" value="TRANSCRIPTIONAL REGULATOR MRAZ"/>
    <property type="match status" value="1"/>
</dbReference>
<dbReference type="PANTHER" id="PTHR34701:SF1">
    <property type="entry name" value="TRANSCRIPTIONAL REGULATOR MRAZ"/>
    <property type="match status" value="1"/>
</dbReference>
<dbReference type="Pfam" id="PF02381">
    <property type="entry name" value="MraZ"/>
    <property type="match status" value="2"/>
</dbReference>
<dbReference type="SUPFAM" id="SSF89447">
    <property type="entry name" value="AbrB/MazE/MraZ-like"/>
    <property type="match status" value="1"/>
</dbReference>
<dbReference type="PROSITE" id="PS51740">
    <property type="entry name" value="SPOVT_ABRB"/>
    <property type="match status" value="2"/>
</dbReference>
<protein>
    <recommendedName>
        <fullName>Transcriptional regulator MraZ</fullName>
    </recommendedName>
</protein>
<name>MRAZ_YERP3</name>
<evidence type="ECO:0000255" key="1">
    <source>
        <dbReference type="HAMAP-Rule" id="MF_01008"/>
    </source>
</evidence>
<evidence type="ECO:0000255" key="2">
    <source>
        <dbReference type="PROSITE-ProRule" id="PRU01076"/>
    </source>
</evidence>